<reference key="1">
    <citation type="journal article" date="2001" name="Nature">
        <title>Genome sequence of enterohaemorrhagic Escherichia coli O157:H7.</title>
        <authorList>
            <person name="Perna N.T."/>
            <person name="Plunkett G. III"/>
            <person name="Burland V."/>
            <person name="Mau B."/>
            <person name="Glasner J.D."/>
            <person name="Rose D.J."/>
            <person name="Mayhew G.F."/>
            <person name="Evans P.S."/>
            <person name="Gregor J."/>
            <person name="Kirkpatrick H.A."/>
            <person name="Posfai G."/>
            <person name="Hackett J."/>
            <person name="Klink S."/>
            <person name="Boutin A."/>
            <person name="Shao Y."/>
            <person name="Miller L."/>
            <person name="Grotbeck E.J."/>
            <person name="Davis N.W."/>
            <person name="Lim A."/>
            <person name="Dimalanta E.T."/>
            <person name="Potamousis K."/>
            <person name="Apodaca J."/>
            <person name="Anantharaman T.S."/>
            <person name="Lin J."/>
            <person name="Yen G."/>
            <person name="Schwartz D.C."/>
            <person name="Welch R.A."/>
            <person name="Blattner F.R."/>
        </authorList>
    </citation>
    <scope>NUCLEOTIDE SEQUENCE [LARGE SCALE GENOMIC DNA]</scope>
    <source>
        <strain>O157:H7 / EDL933 / ATCC 700927 / EHEC</strain>
    </source>
</reference>
<reference key="2">
    <citation type="journal article" date="2001" name="DNA Res.">
        <title>Complete genome sequence of enterohemorrhagic Escherichia coli O157:H7 and genomic comparison with a laboratory strain K-12.</title>
        <authorList>
            <person name="Hayashi T."/>
            <person name="Makino K."/>
            <person name="Ohnishi M."/>
            <person name="Kurokawa K."/>
            <person name="Ishii K."/>
            <person name="Yokoyama K."/>
            <person name="Han C.-G."/>
            <person name="Ohtsubo E."/>
            <person name="Nakayama K."/>
            <person name="Murata T."/>
            <person name="Tanaka M."/>
            <person name="Tobe T."/>
            <person name="Iida T."/>
            <person name="Takami H."/>
            <person name="Honda T."/>
            <person name="Sasakawa C."/>
            <person name="Ogasawara N."/>
            <person name="Yasunaga T."/>
            <person name="Kuhara S."/>
            <person name="Shiba T."/>
            <person name="Hattori M."/>
            <person name="Shinagawa H."/>
        </authorList>
    </citation>
    <scope>NUCLEOTIDE SEQUENCE [LARGE SCALE GENOMIC DNA]</scope>
    <source>
        <strain>O157:H7 / Sakai / RIMD 0509952 / EHEC</strain>
    </source>
</reference>
<gene>
    <name type="primary">recG</name>
    <name type="ordered locus">Z5078</name>
    <name type="ordered locus">ECs4527</name>
</gene>
<keyword id="KW-0067">ATP-binding</keyword>
<keyword id="KW-0227">DNA damage</keyword>
<keyword id="KW-0233">DNA recombination</keyword>
<keyword id="KW-0234">DNA repair</keyword>
<keyword id="KW-0238">DNA-binding</keyword>
<keyword id="KW-0347">Helicase</keyword>
<keyword id="KW-0378">Hydrolase</keyword>
<keyword id="KW-0413">Isomerase</keyword>
<keyword id="KW-0547">Nucleotide-binding</keyword>
<keyword id="KW-1185">Reference proteome</keyword>
<organism>
    <name type="scientific">Escherichia coli O157:H7</name>
    <dbReference type="NCBI Taxonomy" id="83334"/>
    <lineage>
        <taxon>Bacteria</taxon>
        <taxon>Pseudomonadati</taxon>
        <taxon>Pseudomonadota</taxon>
        <taxon>Gammaproteobacteria</taxon>
        <taxon>Enterobacterales</taxon>
        <taxon>Enterobacteriaceae</taxon>
        <taxon>Escherichia</taxon>
    </lineage>
</organism>
<comment type="function">
    <text evidence="1">Plays a critical role in recombination and DNA repair. Helps process Holliday junction intermediates to mature products by catalyzing branch migration. Has replication fork regression activity, unwinds stalled or blocked replication forks to make a HJ that can be resolved. Has a DNA unwinding activity characteristic of a DNA helicase with 3'-5' polarity (By similarity).</text>
</comment>
<comment type="catalytic activity">
    <reaction evidence="1">
        <text>Couples ATP hydrolysis with the unwinding of duplex DNA by translocating in the 3'-5' direction.</text>
        <dbReference type="EC" id="5.6.2.4"/>
    </reaction>
</comment>
<comment type="catalytic activity">
    <reaction evidence="1">
        <text>ATP + H2O = ADP + phosphate + H(+)</text>
        <dbReference type="Rhea" id="RHEA:13065"/>
        <dbReference type="ChEBI" id="CHEBI:15377"/>
        <dbReference type="ChEBI" id="CHEBI:15378"/>
        <dbReference type="ChEBI" id="CHEBI:30616"/>
        <dbReference type="ChEBI" id="CHEBI:43474"/>
        <dbReference type="ChEBI" id="CHEBI:456216"/>
        <dbReference type="EC" id="5.6.2.4"/>
    </reaction>
</comment>
<comment type="subunit">
    <text evidence="2">Monomer (By similarity).</text>
</comment>
<comment type="domain">
    <text evidence="2">The wedge domain within the N-terminus inserts into the replication fork junction, where the lagging and leading strand split (By similarity).</text>
</comment>
<comment type="similarity">
    <text evidence="5">Belongs to the helicase family. RecG subfamily.</text>
</comment>
<comment type="sequence caution" evidence="5">
    <conflict type="erroneous initiation">
        <sequence resource="EMBL-CDS" id="AAG58796"/>
    </conflict>
    <text>Extended N-terminus.</text>
</comment>
<accession>Q8XD86</accession>
<protein>
    <recommendedName>
        <fullName>ATP-dependent DNA helicase RecG</fullName>
        <ecNumber evidence="1">5.6.2.4</ecNumber>
    </recommendedName>
    <alternativeName>
        <fullName>DNA branch migration protein RecG</fullName>
    </alternativeName>
    <alternativeName>
        <fullName>Probable DNA 3'-5' helicase RecG</fullName>
    </alternativeName>
</protein>
<feature type="chain" id="PRO_0000102141" description="ATP-dependent DNA helicase RecG">
    <location>
        <begin position="1"/>
        <end position="693"/>
    </location>
</feature>
<feature type="domain" description="Helicase ATP-binding" evidence="3">
    <location>
        <begin position="283"/>
        <end position="448"/>
    </location>
</feature>
<feature type="domain" description="Helicase C-terminal" evidence="4">
    <location>
        <begin position="482"/>
        <end position="628"/>
    </location>
</feature>
<feature type="region of interest" description="Wedge domain" evidence="2">
    <location>
        <begin position="48"/>
        <end position="146"/>
    </location>
</feature>
<feature type="short sequence motif" description="DEAH box" evidence="3">
    <location>
        <begin position="397"/>
        <end position="400"/>
    </location>
</feature>
<feature type="binding site" evidence="3">
    <location>
        <begin position="296"/>
        <end position="303"/>
    </location>
    <ligand>
        <name>ATP</name>
        <dbReference type="ChEBI" id="CHEBI:30616"/>
    </ligand>
</feature>
<dbReference type="EC" id="5.6.2.4" evidence="1"/>
<dbReference type="EMBL" id="AE005174">
    <property type="protein sequence ID" value="AAG58796.1"/>
    <property type="status" value="ALT_INIT"/>
    <property type="molecule type" value="Genomic_DNA"/>
</dbReference>
<dbReference type="EMBL" id="BA000007">
    <property type="protein sequence ID" value="BAB37950.1"/>
    <property type="molecule type" value="Genomic_DNA"/>
</dbReference>
<dbReference type="PIR" id="G91194">
    <property type="entry name" value="G91194"/>
</dbReference>
<dbReference type="PIR" id="H86041">
    <property type="entry name" value="H86041"/>
</dbReference>
<dbReference type="RefSeq" id="NP_312554.1">
    <property type="nucleotide sequence ID" value="NC_002695.1"/>
</dbReference>
<dbReference type="RefSeq" id="WP_000147776.1">
    <property type="nucleotide sequence ID" value="NZ_VOAI01000021.1"/>
</dbReference>
<dbReference type="SMR" id="Q8XD86"/>
<dbReference type="STRING" id="155864.Z5078"/>
<dbReference type="GeneID" id="915516"/>
<dbReference type="KEGG" id="ece:Z5078"/>
<dbReference type="KEGG" id="ecs:ECs_4527"/>
<dbReference type="PATRIC" id="fig|386585.9.peg.4745"/>
<dbReference type="eggNOG" id="COG1200">
    <property type="taxonomic scope" value="Bacteria"/>
</dbReference>
<dbReference type="HOGENOM" id="CLU_005122_7_1_6"/>
<dbReference type="OMA" id="DNGFQAC"/>
<dbReference type="Proteomes" id="UP000000558">
    <property type="component" value="Chromosome"/>
</dbReference>
<dbReference type="Proteomes" id="UP000002519">
    <property type="component" value="Chromosome"/>
</dbReference>
<dbReference type="GO" id="GO:0005524">
    <property type="term" value="F:ATP binding"/>
    <property type="evidence" value="ECO:0007669"/>
    <property type="project" value="UniProtKB-KW"/>
</dbReference>
<dbReference type="GO" id="GO:0016887">
    <property type="term" value="F:ATP hydrolysis activity"/>
    <property type="evidence" value="ECO:0007669"/>
    <property type="project" value="RHEA"/>
</dbReference>
<dbReference type="GO" id="GO:0003677">
    <property type="term" value="F:DNA binding"/>
    <property type="evidence" value="ECO:0007669"/>
    <property type="project" value="UniProtKB-KW"/>
</dbReference>
<dbReference type="GO" id="GO:0003678">
    <property type="term" value="F:DNA helicase activity"/>
    <property type="evidence" value="ECO:0007669"/>
    <property type="project" value="InterPro"/>
</dbReference>
<dbReference type="GO" id="GO:0006310">
    <property type="term" value="P:DNA recombination"/>
    <property type="evidence" value="ECO:0007669"/>
    <property type="project" value="UniProtKB-KW"/>
</dbReference>
<dbReference type="GO" id="GO:0006281">
    <property type="term" value="P:DNA repair"/>
    <property type="evidence" value="ECO:0007669"/>
    <property type="project" value="UniProtKB-KW"/>
</dbReference>
<dbReference type="CDD" id="cd17992">
    <property type="entry name" value="DEXHc_RecG"/>
    <property type="match status" value="1"/>
</dbReference>
<dbReference type="CDD" id="cd04488">
    <property type="entry name" value="RecG_wedge_OBF"/>
    <property type="match status" value="1"/>
</dbReference>
<dbReference type="CDD" id="cd18811">
    <property type="entry name" value="SF2_C_RecG"/>
    <property type="match status" value="1"/>
</dbReference>
<dbReference type="FunFam" id="2.40.50.140:FF:000134">
    <property type="entry name" value="ATP-dependent DNA helicase RecG"/>
    <property type="match status" value="1"/>
</dbReference>
<dbReference type="FunFam" id="3.40.50.300:FF:000391">
    <property type="entry name" value="ATP-dependent DNA helicase RecG"/>
    <property type="match status" value="1"/>
</dbReference>
<dbReference type="FunFam" id="3.40.50.300:FF:000715">
    <property type="entry name" value="ATP-dependent DNA helicase RecG"/>
    <property type="match status" value="1"/>
</dbReference>
<dbReference type="Gene3D" id="2.40.50.140">
    <property type="entry name" value="Nucleic acid-binding proteins"/>
    <property type="match status" value="1"/>
</dbReference>
<dbReference type="Gene3D" id="3.40.50.300">
    <property type="entry name" value="P-loop containing nucleotide triphosphate hydrolases"/>
    <property type="match status" value="2"/>
</dbReference>
<dbReference type="InterPro" id="IPR004609">
    <property type="entry name" value="ATP-dep_DNA_helicase_RecG"/>
</dbReference>
<dbReference type="InterPro" id="IPR011545">
    <property type="entry name" value="DEAD/DEAH_box_helicase_dom"/>
</dbReference>
<dbReference type="InterPro" id="IPR014001">
    <property type="entry name" value="Helicase_ATP-bd"/>
</dbReference>
<dbReference type="InterPro" id="IPR001650">
    <property type="entry name" value="Helicase_C-like"/>
</dbReference>
<dbReference type="InterPro" id="IPR012340">
    <property type="entry name" value="NA-bd_OB-fold"/>
</dbReference>
<dbReference type="InterPro" id="IPR027417">
    <property type="entry name" value="P-loop_NTPase"/>
</dbReference>
<dbReference type="InterPro" id="IPR047112">
    <property type="entry name" value="RecG/Mfd"/>
</dbReference>
<dbReference type="InterPro" id="IPR045562">
    <property type="entry name" value="RecG_dom3_C"/>
</dbReference>
<dbReference type="InterPro" id="IPR033454">
    <property type="entry name" value="RecG_wedge"/>
</dbReference>
<dbReference type="NCBIfam" id="NF008163">
    <property type="entry name" value="PRK10917.1-1"/>
    <property type="match status" value="1"/>
</dbReference>
<dbReference type="NCBIfam" id="NF008165">
    <property type="entry name" value="PRK10917.1-3"/>
    <property type="match status" value="1"/>
</dbReference>
<dbReference type="NCBIfam" id="NF008166">
    <property type="entry name" value="PRK10917.1-4"/>
    <property type="match status" value="1"/>
</dbReference>
<dbReference type="NCBIfam" id="NF008168">
    <property type="entry name" value="PRK10917.2-2"/>
    <property type="match status" value="1"/>
</dbReference>
<dbReference type="NCBIfam" id="TIGR00643">
    <property type="entry name" value="recG"/>
    <property type="match status" value="1"/>
</dbReference>
<dbReference type="PANTHER" id="PTHR47964">
    <property type="entry name" value="ATP-DEPENDENT DNA HELICASE HOMOLOG RECG, CHLOROPLASTIC"/>
    <property type="match status" value="1"/>
</dbReference>
<dbReference type="PANTHER" id="PTHR47964:SF1">
    <property type="entry name" value="ATP-DEPENDENT DNA HELICASE HOMOLOG RECG, CHLOROPLASTIC"/>
    <property type="match status" value="1"/>
</dbReference>
<dbReference type="Pfam" id="PF00270">
    <property type="entry name" value="DEAD"/>
    <property type="match status" value="1"/>
</dbReference>
<dbReference type="Pfam" id="PF00271">
    <property type="entry name" value="Helicase_C"/>
    <property type="match status" value="1"/>
</dbReference>
<dbReference type="Pfam" id="PF19833">
    <property type="entry name" value="RecG_dom3_C"/>
    <property type="match status" value="1"/>
</dbReference>
<dbReference type="Pfam" id="PF17191">
    <property type="entry name" value="RecG_wedge"/>
    <property type="match status" value="1"/>
</dbReference>
<dbReference type="SMART" id="SM00487">
    <property type="entry name" value="DEXDc"/>
    <property type="match status" value="1"/>
</dbReference>
<dbReference type="SMART" id="SM00490">
    <property type="entry name" value="HELICc"/>
    <property type="match status" value="1"/>
</dbReference>
<dbReference type="SUPFAM" id="SSF50249">
    <property type="entry name" value="Nucleic acid-binding proteins"/>
    <property type="match status" value="1"/>
</dbReference>
<dbReference type="SUPFAM" id="SSF52540">
    <property type="entry name" value="P-loop containing nucleoside triphosphate hydrolases"/>
    <property type="match status" value="2"/>
</dbReference>
<dbReference type="PROSITE" id="PS51192">
    <property type="entry name" value="HELICASE_ATP_BIND_1"/>
    <property type="match status" value="1"/>
</dbReference>
<dbReference type="PROSITE" id="PS51194">
    <property type="entry name" value="HELICASE_CTER"/>
    <property type="match status" value="1"/>
</dbReference>
<evidence type="ECO:0000250" key="1">
    <source>
        <dbReference type="UniProtKB" id="P24230"/>
    </source>
</evidence>
<evidence type="ECO:0000250" key="2">
    <source>
        <dbReference type="UniProtKB" id="Q9WY48"/>
    </source>
</evidence>
<evidence type="ECO:0000255" key="3">
    <source>
        <dbReference type="PROSITE-ProRule" id="PRU00541"/>
    </source>
</evidence>
<evidence type="ECO:0000255" key="4">
    <source>
        <dbReference type="PROSITE-ProRule" id="PRU00542"/>
    </source>
</evidence>
<evidence type="ECO:0000305" key="5"/>
<name>RECG_ECO57</name>
<sequence>MTGRLLDAVPLSSLTGVGAALSNKLAKINLHTVQDLLLHLPLRYEDRTHLYPIGELLPGVYATVEGEVLNCNISFGGRRMMTCQISDGSGILTMRFFNFSAAMKNSLATGRRVLAYGEAKRGKYGAEMIHPEYRVQGDLSTPELQETLTPVYPTTEGVKQATLRKLTDQALDLLDTCAIEELLPPELSQGMMTLPEALRTLHRPPPTLQLSDLETGQHPAQRRLILEELLAHNLSMLALRAGAQRFHAQPLSANDALKNKLLAALPFKPTGAQARVVAEIERDMALDVPMMRLVQGDVGSGKTLVAALAALRAIAHGKQVALMAPTELLAEQHANNFRNWFEPLGIEVGWLAGKQKGKARLSQQEAIASGQVQMIVGTHAIFQEQVQFNGLALVIIDEQHRFGVHQRLALWEKGQQQGFHPHQLIMTATPIPRTLAMTAYADLDTSVIDELPPGRTPVTTVAIPDTRRTDIIDRVRHACITEGRQAYWVCTLIEESELLEAQAAEATWEELKLALPELNVGLVHGRMKPAEKQAVMASFKQGELHLLVATTVIEVGVDVPNASLMIIENPERLGLAQLHQLRGRVGRGAVASHCVLLYKTPLSKTAQIRLQVLRDSNDGFVIAQKDLEIRGPGELLGTRQTGNAEFKVADLLRDQAMIPEVQRLARHIHERYPQQAKALIERWMPETERYSNA</sequence>
<proteinExistence type="inferred from homology"/>